<protein>
    <recommendedName>
        <fullName evidence="1">2-amino-3,7-dideoxy-D-threo-hept-6-ulosonate synthase 1</fullName>
        <shortName evidence="1">ADH synthase 1</shortName>
        <shortName evidence="1">ADHS 1</shortName>
        <shortName evidence="1">ADTH synthase 1</shortName>
        <ecNumber evidence="1">2.2.1.10</ecNumber>
    </recommendedName>
</protein>
<feature type="chain" id="PRO_0000138954" description="2-amino-3,7-dideoxy-D-threo-hept-6-ulosonate synthase 1">
    <location>
        <begin position="1"/>
        <end position="260"/>
    </location>
</feature>
<feature type="active site" description="Proton acceptor" evidence="1">
    <location>
        <position position="26"/>
    </location>
</feature>
<feature type="active site" description="Proton donor" evidence="1">
    <location>
        <position position="144"/>
    </location>
</feature>
<feature type="active site" description="Schiff-base intermediate with substrate" evidence="1">
    <location>
        <position position="172"/>
    </location>
</feature>
<feature type="binding site" evidence="1">
    <location>
        <begin position="26"/>
        <end position="30"/>
    </location>
    <ligand>
        <name>1-deoxy-D-threo-hexo-2,5-diulose 6-phosphate</name>
        <dbReference type="ChEBI" id="CHEBI:58861"/>
    </ligand>
</feature>
<feature type="binding site" evidence="1">
    <location>
        <begin position="144"/>
        <end position="146"/>
    </location>
    <ligand>
        <name>1-deoxy-D-threo-hexo-2,5-diulose 6-phosphate</name>
        <dbReference type="ChEBI" id="CHEBI:58861"/>
    </ligand>
</feature>
<feature type="binding site" evidence="1">
    <location>
        <begin position="194"/>
        <end position="195"/>
    </location>
    <ligand>
        <name>1-deoxy-D-threo-hexo-2,5-diulose 6-phosphate</name>
        <dbReference type="ChEBI" id="CHEBI:58861"/>
    </ligand>
</feature>
<feature type="binding site" evidence="1">
    <location>
        <begin position="221"/>
        <end position="222"/>
    </location>
    <ligand>
        <name>1-deoxy-D-threo-hexo-2,5-diulose 6-phosphate</name>
        <dbReference type="ChEBI" id="CHEBI:58861"/>
    </ligand>
</feature>
<proteinExistence type="inferred from homology"/>
<accession>O30009</accession>
<sequence>MFYMLGKRRRMSRIMKNGRTVILPMDHGITKPEKGIEKVDRVVEEVQDYIDAVIVHKGVAKRSAVLADIDAALIIHLSASTSLAPDPNDKRIVTSVEKAIALGADAVSIHVNIGSKTEAEQIEKAGTISEICDDYGIPLLAMMYPRGSIDVTTETVRHAARIGYELGADILKVPYVQSFEEVVAVCDIPVVVAGGSKGSEHEFLKRVEDAIAKGAAGVAAGRNVFNSDHPVRIAKALHMIVHGNMHMEEVMEYEGNMVVG</sequence>
<reference key="1">
    <citation type="journal article" date="1997" name="Nature">
        <title>The complete genome sequence of the hyperthermophilic, sulphate-reducing archaeon Archaeoglobus fulgidus.</title>
        <authorList>
            <person name="Klenk H.-P."/>
            <person name="Clayton R.A."/>
            <person name="Tomb J.-F."/>
            <person name="White O."/>
            <person name="Nelson K.E."/>
            <person name="Ketchum K.A."/>
            <person name="Dodson R.J."/>
            <person name="Gwinn M.L."/>
            <person name="Hickey E.K."/>
            <person name="Peterson J.D."/>
            <person name="Richardson D.L."/>
            <person name="Kerlavage A.R."/>
            <person name="Graham D.E."/>
            <person name="Kyrpides N.C."/>
            <person name="Fleischmann R.D."/>
            <person name="Quackenbush J."/>
            <person name="Lee N.H."/>
            <person name="Sutton G.G."/>
            <person name="Gill S.R."/>
            <person name="Kirkness E.F."/>
            <person name="Dougherty B.A."/>
            <person name="McKenney K."/>
            <person name="Adams M.D."/>
            <person name="Loftus B.J."/>
            <person name="Peterson S.N."/>
            <person name="Reich C.I."/>
            <person name="McNeil L.K."/>
            <person name="Badger J.H."/>
            <person name="Glodek A."/>
            <person name="Zhou L."/>
            <person name="Overbeek R."/>
            <person name="Gocayne J.D."/>
            <person name="Weidman J.F."/>
            <person name="McDonald L.A."/>
            <person name="Utterback T.R."/>
            <person name="Cotton M.D."/>
            <person name="Spriggs T."/>
            <person name="Artiach P."/>
            <person name="Kaine B.P."/>
            <person name="Sykes S.M."/>
            <person name="Sadow P.W."/>
            <person name="D'Andrea K.P."/>
            <person name="Bowman C."/>
            <person name="Fujii C."/>
            <person name="Garland S.A."/>
            <person name="Mason T.M."/>
            <person name="Olsen G.J."/>
            <person name="Fraser C.M."/>
            <person name="Smith H.O."/>
            <person name="Woese C.R."/>
            <person name="Venter J.C."/>
        </authorList>
    </citation>
    <scope>NUCLEOTIDE SEQUENCE [LARGE SCALE GENOMIC DNA]</scope>
    <source>
        <strain>ATCC 49558 / DSM 4304 / JCM 9628 / NBRC 100126 / VC-16</strain>
    </source>
</reference>
<organism>
    <name type="scientific">Archaeoglobus fulgidus (strain ATCC 49558 / DSM 4304 / JCM 9628 / NBRC 100126 / VC-16)</name>
    <dbReference type="NCBI Taxonomy" id="224325"/>
    <lineage>
        <taxon>Archaea</taxon>
        <taxon>Methanobacteriati</taxon>
        <taxon>Methanobacteriota</taxon>
        <taxon>Archaeoglobi</taxon>
        <taxon>Archaeoglobales</taxon>
        <taxon>Archaeoglobaceae</taxon>
        <taxon>Archaeoglobus</taxon>
    </lineage>
</organism>
<keyword id="KW-0028">Amino-acid biosynthesis</keyword>
<keyword id="KW-0057">Aromatic amino acid biosynthesis</keyword>
<keyword id="KW-1185">Reference proteome</keyword>
<keyword id="KW-0704">Schiff base</keyword>
<keyword id="KW-0808">Transferase</keyword>
<name>ADHS1_ARCFU</name>
<dbReference type="EC" id="2.2.1.10" evidence="1"/>
<dbReference type="EMBL" id="AE000782">
    <property type="protein sequence ID" value="AAB91002.1"/>
    <property type="molecule type" value="Genomic_DNA"/>
</dbReference>
<dbReference type="PIR" id="F69278">
    <property type="entry name" value="F69278"/>
</dbReference>
<dbReference type="SMR" id="O30009"/>
<dbReference type="STRING" id="224325.AF_0230"/>
<dbReference type="PaxDb" id="224325-AF_0230"/>
<dbReference type="EnsemblBacteria" id="AAB91002">
    <property type="protein sequence ID" value="AAB91002"/>
    <property type="gene ID" value="AF_0230"/>
</dbReference>
<dbReference type="KEGG" id="afu:AF_0230"/>
<dbReference type="eggNOG" id="arCOG04044">
    <property type="taxonomic scope" value="Archaea"/>
</dbReference>
<dbReference type="HOGENOM" id="CLU_057069_2_0_2"/>
<dbReference type="PhylomeDB" id="O30009"/>
<dbReference type="Proteomes" id="UP000002199">
    <property type="component" value="Chromosome"/>
</dbReference>
<dbReference type="GO" id="GO:0004332">
    <property type="term" value="F:fructose-bisphosphate aldolase activity"/>
    <property type="evidence" value="ECO:0007669"/>
    <property type="project" value="InterPro"/>
</dbReference>
<dbReference type="GO" id="GO:0016836">
    <property type="term" value="F:hydro-lyase activity"/>
    <property type="evidence" value="ECO:0007669"/>
    <property type="project" value="InterPro"/>
</dbReference>
<dbReference type="GO" id="GO:0016744">
    <property type="term" value="F:transketolase or transaldolase activity"/>
    <property type="evidence" value="ECO:0007669"/>
    <property type="project" value="UniProtKB-UniRule"/>
</dbReference>
<dbReference type="GO" id="GO:0008652">
    <property type="term" value="P:amino acid biosynthetic process"/>
    <property type="evidence" value="ECO:0007669"/>
    <property type="project" value="UniProtKB-KW"/>
</dbReference>
<dbReference type="GO" id="GO:0009073">
    <property type="term" value="P:aromatic amino acid family biosynthetic process"/>
    <property type="evidence" value="ECO:0007669"/>
    <property type="project" value="UniProtKB-UniRule"/>
</dbReference>
<dbReference type="CDD" id="cd00958">
    <property type="entry name" value="DhnA"/>
    <property type="match status" value="1"/>
</dbReference>
<dbReference type="Gene3D" id="3.20.20.70">
    <property type="entry name" value="Aldolase class I"/>
    <property type="match status" value="1"/>
</dbReference>
<dbReference type="HAMAP" id="MF_00960">
    <property type="entry name" value="ADH_synthase"/>
    <property type="match status" value="1"/>
</dbReference>
<dbReference type="InterPro" id="IPR010210">
    <property type="entry name" value="ADH_synthase"/>
</dbReference>
<dbReference type="InterPro" id="IPR013785">
    <property type="entry name" value="Aldolase_TIM"/>
</dbReference>
<dbReference type="InterPro" id="IPR002915">
    <property type="entry name" value="DeoC/FbaB/LacD_aldolase"/>
</dbReference>
<dbReference type="InterPro" id="IPR050456">
    <property type="entry name" value="DeoC/FbaB_aldolase"/>
</dbReference>
<dbReference type="InterPro" id="IPR041720">
    <property type="entry name" value="FbaB-like"/>
</dbReference>
<dbReference type="NCBIfam" id="TIGR01949">
    <property type="entry name" value="ADH_synth"/>
    <property type="match status" value="1"/>
</dbReference>
<dbReference type="NCBIfam" id="NF005556">
    <property type="entry name" value="PRK07226.1"/>
    <property type="match status" value="1"/>
</dbReference>
<dbReference type="PANTHER" id="PTHR47916:SF1">
    <property type="entry name" value="3-HYDROXY-5-PHOSPHONOOXYPENTANE-2,4-DIONE THIOLASE"/>
    <property type="match status" value="1"/>
</dbReference>
<dbReference type="PANTHER" id="PTHR47916">
    <property type="entry name" value="FRUCTOSE-BISPHOSPHATE ALDOLASE CLASS 1"/>
    <property type="match status" value="1"/>
</dbReference>
<dbReference type="Pfam" id="PF01791">
    <property type="entry name" value="DeoC"/>
    <property type="match status" value="1"/>
</dbReference>
<dbReference type="PIRSF" id="PIRSF038992">
    <property type="entry name" value="Aldolase_Ia"/>
    <property type="match status" value="1"/>
</dbReference>
<dbReference type="SMART" id="SM01133">
    <property type="entry name" value="DeoC"/>
    <property type="match status" value="1"/>
</dbReference>
<dbReference type="SUPFAM" id="SSF51569">
    <property type="entry name" value="Aldolase"/>
    <property type="match status" value="1"/>
</dbReference>
<gene>
    <name evidence="1" type="primary">aroA'</name>
    <name type="ordered locus">AF_0230</name>
</gene>
<comment type="function">
    <text evidence="1">Catalyzes a transaldol reaction between 6-deoxy-5-ketofructose 1-phosphate (DKFP) and L-aspartate semialdehyde (ASA) with an elimination of hydroxypyruvaldehyde phosphate to yield 2-amino-3,7-dideoxy-D-threo-hept-6-ulosonate (ADH). Plays a key role in an alternative pathway of the biosynthesis of 3-dehydroquinate (DHQ), which is involved in the canonical pathway for the biosynthesis of aromatic amino acids.</text>
</comment>
<comment type="catalytic activity">
    <reaction evidence="1">
        <text>1-deoxy-D-threo-hexo-2,5-diulose 6-phosphate + L-aspartate 4-semialdehyde = 2,3-dioxopropyl phosphate + 2-amino-2,3,7-trideoxy-D-lyxo-hept-6-ulosonate</text>
        <dbReference type="Rhea" id="RHEA:25952"/>
        <dbReference type="ChEBI" id="CHEBI:58859"/>
        <dbReference type="ChEBI" id="CHEBI:58860"/>
        <dbReference type="ChEBI" id="CHEBI:58861"/>
        <dbReference type="ChEBI" id="CHEBI:537519"/>
        <dbReference type="EC" id="2.2.1.10"/>
    </reaction>
</comment>
<comment type="subunit">
    <text evidence="1">Homodecamer.</text>
</comment>
<comment type="similarity">
    <text evidence="1">Belongs to the DeoC/FbaB aldolase family. ADHS subfamily.</text>
</comment>
<evidence type="ECO:0000255" key="1">
    <source>
        <dbReference type="HAMAP-Rule" id="MF_00960"/>
    </source>
</evidence>